<reference key="1">
    <citation type="journal article" date="2005" name="PLoS Biol.">
        <title>The genomes of Oryza sativa: a history of duplications.</title>
        <authorList>
            <person name="Yu J."/>
            <person name="Wang J."/>
            <person name="Lin W."/>
            <person name="Li S."/>
            <person name="Li H."/>
            <person name="Zhou J."/>
            <person name="Ni P."/>
            <person name="Dong W."/>
            <person name="Hu S."/>
            <person name="Zeng C."/>
            <person name="Zhang J."/>
            <person name="Zhang Y."/>
            <person name="Li R."/>
            <person name="Xu Z."/>
            <person name="Li S."/>
            <person name="Li X."/>
            <person name="Zheng H."/>
            <person name="Cong L."/>
            <person name="Lin L."/>
            <person name="Yin J."/>
            <person name="Geng J."/>
            <person name="Li G."/>
            <person name="Shi J."/>
            <person name="Liu J."/>
            <person name="Lv H."/>
            <person name="Li J."/>
            <person name="Wang J."/>
            <person name="Deng Y."/>
            <person name="Ran L."/>
            <person name="Shi X."/>
            <person name="Wang X."/>
            <person name="Wu Q."/>
            <person name="Li C."/>
            <person name="Ren X."/>
            <person name="Wang J."/>
            <person name="Wang X."/>
            <person name="Li D."/>
            <person name="Liu D."/>
            <person name="Zhang X."/>
            <person name="Ji Z."/>
            <person name="Zhao W."/>
            <person name="Sun Y."/>
            <person name="Zhang Z."/>
            <person name="Bao J."/>
            <person name="Han Y."/>
            <person name="Dong L."/>
            <person name="Ji J."/>
            <person name="Chen P."/>
            <person name="Wu S."/>
            <person name="Liu J."/>
            <person name="Xiao Y."/>
            <person name="Bu D."/>
            <person name="Tan J."/>
            <person name="Yang L."/>
            <person name="Ye C."/>
            <person name="Zhang J."/>
            <person name="Xu J."/>
            <person name="Zhou Y."/>
            <person name="Yu Y."/>
            <person name="Zhang B."/>
            <person name="Zhuang S."/>
            <person name="Wei H."/>
            <person name="Liu B."/>
            <person name="Lei M."/>
            <person name="Yu H."/>
            <person name="Li Y."/>
            <person name="Xu H."/>
            <person name="Wei S."/>
            <person name="He X."/>
            <person name="Fang L."/>
            <person name="Zhang Z."/>
            <person name="Zhang Y."/>
            <person name="Huang X."/>
            <person name="Su Z."/>
            <person name="Tong W."/>
            <person name="Li J."/>
            <person name="Tong Z."/>
            <person name="Li S."/>
            <person name="Ye J."/>
            <person name="Wang L."/>
            <person name="Fang L."/>
            <person name="Lei T."/>
            <person name="Chen C.-S."/>
            <person name="Chen H.-C."/>
            <person name="Xu Z."/>
            <person name="Li H."/>
            <person name="Huang H."/>
            <person name="Zhang F."/>
            <person name="Xu H."/>
            <person name="Li N."/>
            <person name="Zhao C."/>
            <person name="Li S."/>
            <person name="Dong L."/>
            <person name="Huang Y."/>
            <person name="Li L."/>
            <person name="Xi Y."/>
            <person name="Qi Q."/>
            <person name="Li W."/>
            <person name="Zhang B."/>
            <person name="Hu W."/>
            <person name="Zhang Y."/>
            <person name="Tian X."/>
            <person name="Jiao Y."/>
            <person name="Liang X."/>
            <person name="Jin J."/>
            <person name="Gao L."/>
            <person name="Zheng W."/>
            <person name="Hao B."/>
            <person name="Liu S.-M."/>
            <person name="Wang W."/>
            <person name="Yuan L."/>
            <person name="Cao M."/>
            <person name="McDermott J."/>
            <person name="Samudrala R."/>
            <person name="Wang J."/>
            <person name="Wong G.K.-S."/>
            <person name="Yang H."/>
        </authorList>
    </citation>
    <scope>NUCLEOTIDE SEQUENCE [LARGE SCALE GENOMIC DNA]</scope>
    <source>
        <strain>cv. 93-11</strain>
    </source>
</reference>
<accession>B8AQW7</accession>
<keyword id="KW-0378">Hydrolase</keyword>
<keyword id="KW-0442">Lipid degradation</keyword>
<keyword id="KW-0443">Lipid metabolism</keyword>
<keyword id="KW-0611">Plant defense</keyword>
<keyword id="KW-1185">Reference proteome</keyword>
<feature type="chain" id="PRO_0000425825" description="Patatin-like protein 1">
    <location>
        <begin position="1"/>
        <end position="414"/>
    </location>
</feature>
<feature type="domain" description="PNPLA" evidence="2">
    <location>
        <begin position="20"/>
        <end position="224"/>
    </location>
</feature>
<feature type="short sequence motif" description="GXGXXG" evidence="2">
    <location>
        <begin position="24"/>
        <end position="29"/>
    </location>
</feature>
<feature type="short sequence motif" description="GXSXG" evidence="2">
    <location>
        <begin position="62"/>
        <end position="66"/>
    </location>
</feature>
<feature type="short sequence motif" description="DGA/G" evidence="2">
    <location>
        <begin position="211"/>
        <end position="213"/>
    </location>
</feature>
<feature type="active site" description="Nucleophile" evidence="2">
    <location>
        <position position="64"/>
    </location>
</feature>
<feature type="active site" description="Proton acceptor" evidence="2">
    <location>
        <position position="211"/>
    </location>
</feature>
<organism>
    <name type="scientific">Oryza sativa subsp. indica</name>
    <name type="common">Rice</name>
    <dbReference type="NCBI Taxonomy" id="39946"/>
    <lineage>
        <taxon>Eukaryota</taxon>
        <taxon>Viridiplantae</taxon>
        <taxon>Streptophyta</taxon>
        <taxon>Embryophyta</taxon>
        <taxon>Tracheophyta</taxon>
        <taxon>Spermatophyta</taxon>
        <taxon>Magnoliopsida</taxon>
        <taxon>Liliopsida</taxon>
        <taxon>Poales</taxon>
        <taxon>Poaceae</taxon>
        <taxon>BOP clade</taxon>
        <taxon>Oryzoideae</taxon>
        <taxon>Oryzeae</taxon>
        <taxon>Oryzinae</taxon>
        <taxon>Oryza</taxon>
        <taxon>Oryza sativa</taxon>
    </lineage>
</organism>
<gene>
    <name type="primary">PLP1</name>
    <name type="ORF">OsI_11898</name>
</gene>
<protein>
    <recommendedName>
        <fullName>Patatin-like protein 1</fullName>
        <ecNumber>3.1.1.-</ecNumber>
    </recommendedName>
</protein>
<name>PLP1_ORYSI</name>
<dbReference type="EC" id="3.1.1.-"/>
<dbReference type="EMBL" id="CM000128">
    <property type="protein sequence ID" value="EEC75405.1"/>
    <property type="molecule type" value="Genomic_DNA"/>
</dbReference>
<dbReference type="SMR" id="B8AQW7"/>
<dbReference type="STRING" id="39946.B8AQW7"/>
<dbReference type="EnsemblPlants" id="BGIOSGA012798-TA">
    <property type="protein sequence ID" value="BGIOSGA012798-PA"/>
    <property type="gene ID" value="BGIOSGA012798"/>
</dbReference>
<dbReference type="Gramene" id="BGIOSGA012798-TA">
    <property type="protein sequence ID" value="BGIOSGA012798-PA"/>
    <property type="gene ID" value="BGIOSGA012798"/>
</dbReference>
<dbReference type="HOGENOM" id="CLU_000288_144_0_1"/>
<dbReference type="OMA" id="RAMAGCV"/>
<dbReference type="Proteomes" id="UP000007015">
    <property type="component" value="Chromosome 3"/>
</dbReference>
<dbReference type="GO" id="GO:0047372">
    <property type="term" value="F:monoacylglycerol lipase activity"/>
    <property type="evidence" value="ECO:0007669"/>
    <property type="project" value="TreeGrafter"/>
</dbReference>
<dbReference type="GO" id="GO:0004620">
    <property type="term" value="F:phospholipase activity"/>
    <property type="evidence" value="ECO:0007669"/>
    <property type="project" value="TreeGrafter"/>
</dbReference>
<dbReference type="GO" id="GO:0006952">
    <property type="term" value="P:defense response"/>
    <property type="evidence" value="ECO:0007669"/>
    <property type="project" value="UniProtKB-KW"/>
</dbReference>
<dbReference type="GO" id="GO:0016042">
    <property type="term" value="P:lipid catabolic process"/>
    <property type="evidence" value="ECO:0007669"/>
    <property type="project" value="UniProtKB-KW"/>
</dbReference>
<dbReference type="CDD" id="cd07214">
    <property type="entry name" value="Pat17_isozyme_like"/>
    <property type="match status" value="1"/>
</dbReference>
<dbReference type="FunFam" id="3.40.1090.10:FF:000005">
    <property type="entry name" value="Patatin"/>
    <property type="match status" value="1"/>
</dbReference>
<dbReference type="Gene3D" id="3.40.1090.10">
    <property type="entry name" value="Cytosolic phospholipase A2 catalytic domain"/>
    <property type="match status" value="1"/>
</dbReference>
<dbReference type="InterPro" id="IPR016035">
    <property type="entry name" value="Acyl_Trfase/lysoPLipase"/>
</dbReference>
<dbReference type="InterPro" id="IPR002641">
    <property type="entry name" value="PNPLA_dom"/>
</dbReference>
<dbReference type="PANTHER" id="PTHR32176:SF5">
    <property type="entry name" value="PATATIN-LIKE PROTEIN 1"/>
    <property type="match status" value="1"/>
</dbReference>
<dbReference type="PANTHER" id="PTHR32176">
    <property type="entry name" value="XYLOSE ISOMERASE"/>
    <property type="match status" value="1"/>
</dbReference>
<dbReference type="Pfam" id="PF01734">
    <property type="entry name" value="Patatin"/>
    <property type="match status" value="1"/>
</dbReference>
<dbReference type="SUPFAM" id="SSF52151">
    <property type="entry name" value="FabD/lysophospholipase-like"/>
    <property type="match status" value="1"/>
</dbReference>
<dbReference type="PROSITE" id="PS51635">
    <property type="entry name" value="PNPLA"/>
    <property type="match status" value="1"/>
</dbReference>
<sequence>MAGCVVGEPASAPGQRVTLLAIDGGGIRGLIPGTILAFLEARLQELDGPDARLADYFDCIAGTSTGGLITAMLAAPGDHGRPLFAASDINRFYLDNGPRIFPQKRCGMAAAMAALTRPRYNGKYLQGKIRKMLGETRVRDTLTNVVIPTFDVRLLQPTIFSTYDAKSMPLKNALLSDICISTSAAPTYLPAHCFQTTDDATGKVREFDLIDGGVAANNPTMVAMTQITKKIMVKDKEELYPVKPSDCGKFLVLSLGTGSTSDQGMYTARQCSRWGIVRWLRNKGMAPIIDIFMAASSDLVDIHAAVMFQSLHSDGDYLRIQDNTLHGDAATVDAATRDNMRALVGIGERMLAQRVSRVNVETGRYVEVPGAGSNADALRGFARQLSEERRARLGRRNACGGGGEGEPSGVACKR</sequence>
<comment type="function">
    <text evidence="1">Possesses non-specific lipolytic acyl hydrolase (LAH) activity. Hydrolyzes phospholipids as well as galactolipids. May play a role in disease resistance (By similarity).</text>
</comment>
<comment type="domain">
    <text evidence="1">The nitrogen atoms of the two glycine residues in the GGXR motif define the oxyanion hole, and stabilize the oxyanion that forms during the nucleophilic attack by the catalytic serine during substrate cleavage.</text>
</comment>
<comment type="similarity">
    <text evidence="3">Belongs to the patatin family.</text>
</comment>
<evidence type="ECO:0000250" key="1"/>
<evidence type="ECO:0000255" key="2">
    <source>
        <dbReference type="PROSITE-ProRule" id="PRU01161"/>
    </source>
</evidence>
<evidence type="ECO:0000305" key="3"/>
<proteinExistence type="inferred from homology"/>